<comment type="similarity">
    <text evidence="1">Belongs to the bacterial ribosomal protein bL36 family.</text>
</comment>
<proteinExistence type="inferred from homology"/>
<dbReference type="EMBL" id="CP000046">
    <property type="protein sequence ID" value="AAW37091.1"/>
    <property type="molecule type" value="Genomic_DNA"/>
</dbReference>
<dbReference type="RefSeq" id="WP_000868342.1">
    <property type="nucleotide sequence ID" value="NZ_JBGOFO010000004.1"/>
</dbReference>
<dbReference type="SMR" id="Q5HDY1"/>
<dbReference type="GeneID" id="98346539"/>
<dbReference type="KEGG" id="sac:SACOL2216"/>
<dbReference type="HOGENOM" id="CLU_135723_6_2_9"/>
<dbReference type="Proteomes" id="UP000000530">
    <property type="component" value="Chromosome"/>
</dbReference>
<dbReference type="GO" id="GO:0005737">
    <property type="term" value="C:cytoplasm"/>
    <property type="evidence" value="ECO:0007669"/>
    <property type="project" value="UniProtKB-ARBA"/>
</dbReference>
<dbReference type="GO" id="GO:1990904">
    <property type="term" value="C:ribonucleoprotein complex"/>
    <property type="evidence" value="ECO:0007669"/>
    <property type="project" value="UniProtKB-KW"/>
</dbReference>
<dbReference type="GO" id="GO:0005840">
    <property type="term" value="C:ribosome"/>
    <property type="evidence" value="ECO:0007669"/>
    <property type="project" value="UniProtKB-KW"/>
</dbReference>
<dbReference type="GO" id="GO:0003735">
    <property type="term" value="F:structural constituent of ribosome"/>
    <property type="evidence" value="ECO:0007669"/>
    <property type="project" value="InterPro"/>
</dbReference>
<dbReference type="GO" id="GO:0006412">
    <property type="term" value="P:translation"/>
    <property type="evidence" value="ECO:0007669"/>
    <property type="project" value="UniProtKB-UniRule"/>
</dbReference>
<dbReference type="HAMAP" id="MF_00251">
    <property type="entry name" value="Ribosomal_bL36"/>
    <property type="match status" value="1"/>
</dbReference>
<dbReference type="InterPro" id="IPR000473">
    <property type="entry name" value="Ribosomal_bL36"/>
</dbReference>
<dbReference type="InterPro" id="IPR035977">
    <property type="entry name" value="Ribosomal_bL36_sp"/>
</dbReference>
<dbReference type="NCBIfam" id="TIGR01022">
    <property type="entry name" value="rpmJ_bact"/>
    <property type="match status" value="1"/>
</dbReference>
<dbReference type="PANTHER" id="PTHR42888">
    <property type="entry name" value="50S RIBOSOMAL PROTEIN L36, CHLOROPLASTIC"/>
    <property type="match status" value="1"/>
</dbReference>
<dbReference type="PANTHER" id="PTHR42888:SF1">
    <property type="entry name" value="LARGE RIBOSOMAL SUBUNIT PROTEIN BL36C"/>
    <property type="match status" value="1"/>
</dbReference>
<dbReference type="Pfam" id="PF00444">
    <property type="entry name" value="Ribosomal_L36"/>
    <property type="match status" value="1"/>
</dbReference>
<dbReference type="SUPFAM" id="SSF57840">
    <property type="entry name" value="Ribosomal protein L36"/>
    <property type="match status" value="1"/>
</dbReference>
<dbReference type="PROSITE" id="PS00828">
    <property type="entry name" value="RIBOSOMAL_L36"/>
    <property type="match status" value="1"/>
</dbReference>
<evidence type="ECO:0000255" key="1">
    <source>
        <dbReference type="HAMAP-Rule" id="MF_00251"/>
    </source>
</evidence>
<evidence type="ECO:0000305" key="2"/>
<reference key="1">
    <citation type="journal article" date="2005" name="J. Bacteriol.">
        <title>Insights on evolution of virulence and resistance from the complete genome analysis of an early methicillin-resistant Staphylococcus aureus strain and a biofilm-producing methicillin-resistant Staphylococcus epidermidis strain.</title>
        <authorList>
            <person name="Gill S.R."/>
            <person name="Fouts D.E."/>
            <person name="Archer G.L."/>
            <person name="Mongodin E.F."/>
            <person name="DeBoy R.T."/>
            <person name="Ravel J."/>
            <person name="Paulsen I.T."/>
            <person name="Kolonay J.F."/>
            <person name="Brinkac L.M."/>
            <person name="Beanan M.J."/>
            <person name="Dodson R.J."/>
            <person name="Daugherty S.C."/>
            <person name="Madupu R."/>
            <person name="Angiuoli S.V."/>
            <person name="Durkin A.S."/>
            <person name="Haft D.H."/>
            <person name="Vamathevan J.J."/>
            <person name="Khouri H."/>
            <person name="Utterback T.R."/>
            <person name="Lee C."/>
            <person name="Dimitrov G."/>
            <person name="Jiang L."/>
            <person name="Qin H."/>
            <person name="Weidman J."/>
            <person name="Tran K."/>
            <person name="Kang K.H."/>
            <person name="Hance I.R."/>
            <person name="Nelson K.E."/>
            <person name="Fraser C.M."/>
        </authorList>
    </citation>
    <scope>NUCLEOTIDE SEQUENCE [LARGE SCALE GENOMIC DNA]</scope>
    <source>
        <strain>COL</strain>
    </source>
</reference>
<name>RL36_STAAC</name>
<feature type="chain" id="PRO_0000126257" description="Large ribosomal subunit protein bL36">
    <location>
        <begin position="1"/>
        <end position="37"/>
    </location>
</feature>
<accession>Q5HDY1</accession>
<gene>
    <name evidence="1" type="primary">rpmJ</name>
    <name type="ordered locus">SACOL2216</name>
</gene>
<sequence>MKVRPSVKPICEKCKVIKRKGKVMVICENPKHKQRQG</sequence>
<keyword id="KW-0687">Ribonucleoprotein</keyword>
<keyword id="KW-0689">Ribosomal protein</keyword>
<organism>
    <name type="scientific">Staphylococcus aureus (strain COL)</name>
    <dbReference type="NCBI Taxonomy" id="93062"/>
    <lineage>
        <taxon>Bacteria</taxon>
        <taxon>Bacillati</taxon>
        <taxon>Bacillota</taxon>
        <taxon>Bacilli</taxon>
        <taxon>Bacillales</taxon>
        <taxon>Staphylococcaceae</taxon>
        <taxon>Staphylococcus</taxon>
    </lineage>
</organism>
<protein>
    <recommendedName>
        <fullName evidence="1">Large ribosomal subunit protein bL36</fullName>
    </recommendedName>
    <alternativeName>
        <fullName evidence="2">50S ribosomal protein L36</fullName>
    </alternativeName>
</protein>